<protein>
    <recommendedName>
        <fullName evidence="3">Terpene cyclase dpchB</fullName>
        <ecNumber evidence="5">4.2.3.-</ecNumber>
    </recommendedName>
    <alternativeName>
        <fullName evidence="3">Diterpenoid pyrone biosynthesis cluster protein B</fullName>
    </alternativeName>
</protein>
<name>DPCHB_COLHI</name>
<accession>A0A1B7YCX1</accession>
<gene>
    <name evidence="3" type="primary">dpchB</name>
    <name type="ORF">CH63R_05476</name>
</gene>
<evidence type="ECO:0000255" key="1"/>
<evidence type="ECO:0000269" key="2">
    <source>
    </source>
</evidence>
<evidence type="ECO:0000303" key="3">
    <source>
    </source>
</evidence>
<evidence type="ECO:0000305" key="4"/>
<evidence type="ECO:0000305" key="5">
    <source>
    </source>
</evidence>
<feature type="chain" id="PRO_0000451528" description="Terpene cyclase dpchB">
    <location>
        <begin position="1"/>
        <end position="242"/>
    </location>
</feature>
<feature type="transmembrane region" description="Helical" evidence="1">
    <location>
        <begin position="16"/>
        <end position="36"/>
    </location>
</feature>
<feature type="transmembrane region" description="Helical" evidence="1">
    <location>
        <begin position="51"/>
        <end position="71"/>
    </location>
</feature>
<feature type="transmembrane region" description="Helical" evidence="1">
    <location>
        <begin position="78"/>
        <end position="95"/>
    </location>
</feature>
<feature type="transmembrane region" description="Helical" evidence="1">
    <location>
        <begin position="114"/>
        <end position="134"/>
    </location>
</feature>
<feature type="transmembrane region" description="Helical" evidence="1">
    <location>
        <begin position="141"/>
        <end position="161"/>
    </location>
</feature>
<feature type="transmembrane region" description="Helical" evidence="1">
    <location>
        <begin position="169"/>
        <end position="189"/>
    </location>
</feature>
<feature type="transmembrane region" description="Helical" evidence="1">
    <location>
        <begin position="207"/>
        <end position="227"/>
    </location>
</feature>
<organism>
    <name type="scientific">Colletotrichum higginsianum (strain IMI 349063)</name>
    <name type="common">Crucifer anthracnose fungus</name>
    <dbReference type="NCBI Taxonomy" id="759273"/>
    <lineage>
        <taxon>Eukaryota</taxon>
        <taxon>Fungi</taxon>
        <taxon>Dikarya</taxon>
        <taxon>Ascomycota</taxon>
        <taxon>Pezizomycotina</taxon>
        <taxon>Sordariomycetes</taxon>
        <taxon>Hypocreomycetidae</taxon>
        <taxon>Glomerellales</taxon>
        <taxon>Glomerellaceae</taxon>
        <taxon>Colletotrichum</taxon>
        <taxon>Colletotrichum destructivum species complex</taxon>
    </lineage>
</organism>
<sequence length="242" mass="27487">MNVADISQAPEAYRDVVWIADTCKLIMGIGWTANYVGMIRKSLKDQTYAMALLPLCCNFAWELTYAIMYAFTTSLEKYVHFSGLLLNCGVMYTAVKNAPREWEHAPLVQRNLRLIFVLAVAGFASAHVVLAKQVGPELGQAWSAYACQLLLSVGGLCQLLCRGHSRGASYFLWFSRFFGSLVLVPQDIIRYTYWKEAHEFMGSPMYIWFVTIFLILDGSYGLCLWYVRRFEQQNPAAGKLKK</sequence>
<dbReference type="EC" id="4.2.3.-" evidence="5"/>
<dbReference type="EMBL" id="LTAN01000004">
    <property type="protein sequence ID" value="OBR09784.1"/>
    <property type="molecule type" value="Genomic_DNA"/>
</dbReference>
<dbReference type="RefSeq" id="XP_018158301.1">
    <property type="nucleotide sequence ID" value="XM_018300451.1"/>
</dbReference>
<dbReference type="GeneID" id="28864558"/>
<dbReference type="KEGG" id="chig:CH63R_05476"/>
<dbReference type="VEuPathDB" id="FungiDB:CH63R_05476"/>
<dbReference type="OrthoDB" id="42813at1028384"/>
<dbReference type="UniPathway" id="UPA00213"/>
<dbReference type="Proteomes" id="UP000092177">
    <property type="component" value="Chromosome 4"/>
</dbReference>
<dbReference type="GO" id="GO:0016020">
    <property type="term" value="C:membrane"/>
    <property type="evidence" value="ECO:0007669"/>
    <property type="project" value="UniProtKB-SubCell"/>
</dbReference>
<dbReference type="GO" id="GO:0016829">
    <property type="term" value="F:lyase activity"/>
    <property type="evidence" value="ECO:0007669"/>
    <property type="project" value="UniProtKB-KW"/>
</dbReference>
<dbReference type="GO" id="GO:0016114">
    <property type="term" value="P:terpenoid biosynthetic process"/>
    <property type="evidence" value="ECO:0007669"/>
    <property type="project" value="UniProtKB-UniPathway"/>
</dbReference>
<dbReference type="InterPro" id="IPR039020">
    <property type="entry name" value="PaxB-like"/>
</dbReference>
<dbReference type="PANTHER" id="PTHR42038">
    <property type="match status" value="1"/>
</dbReference>
<dbReference type="PANTHER" id="PTHR42038:SF2">
    <property type="entry name" value="TERPENE CYCLASE AUSL"/>
    <property type="match status" value="1"/>
</dbReference>
<dbReference type="Pfam" id="PF25129">
    <property type="entry name" value="Pyr4-TMTC"/>
    <property type="match status" value="1"/>
</dbReference>
<keyword id="KW-0456">Lyase</keyword>
<keyword id="KW-0472">Membrane</keyword>
<keyword id="KW-1185">Reference proteome</keyword>
<keyword id="KW-0812">Transmembrane</keyword>
<keyword id="KW-1133">Transmembrane helix</keyword>
<comment type="function">
    <text evidence="2 5">Terpene cyclase; part of the gene cluster that mediates the biosynthesis of the diterpenoid pyrones higginsianins A and B (PubMed:32286350). The first step of the pathway is the synthesis of the alpha-pyrone moiety by the polyketide synthase dpchA via condensation of one acetyl-CoA starter unit with 3 malonyl-CoA units and 2 methylations (Probable). The alpha-pyrone is then combined with geranylgeranyl pyrophosphate (GGPP) formed by the GGPP synthase dpchD through the action of the prenyltransferase dpchC to yield a linear alpha-pyrone diterpenoid (Probable). Subsequent steps in the diterpenoid pyrone biosynthetic pathway involve the decalin core formation, which is initiated by the epoxidation of the C10-C11 olefin by the FAD-dependent oxidoreductase dpchE, and is followed by a cyclization cascade catalyzed by the terpene cyclase dpchB (Probable). The short chain dehydrogenase/reductase dpchG then oxidizes the 8S hydroxy group to a ketone and the short chain dehydrogenase/reductase dpchH reduces the ketone to the 8R hydroxy group to yield higginsianin B (PubMed:32286350). Finally, the FAD-dependent oxidoreductase dpchF converts higginsianin B into higginsianin A (PubMed:32286350).</text>
</comment>
<comment type="pathway">
    <text evidence="5">Secondary metabolite biosynthesis; terpenoid biosynthesis.</text>
</comment>
<comment type="subcellular location">
    <subcellularLocation>
        <location evidence="1">Membrane</location>
        <topology evidence="1">Multi-pass membrane protein</topology>
    </subcellularLocation>
</comment>
<comment type="biotechnology">
    <text evidence="2">Diterpenoid pyrones display various biological activities and higginsianin A shows anti-HIV activity.</text>
</comment>
<comment type="similarity">
    <text evidence="4">Belongs to the paxB family.</text>
</comment>
<proteinExistence type="evidence at protein level"/>
<reference key="1">
    <citation type="journal article" date="2017" name="BMC Genomics">
        <title>Gapless genome assembly of Colletotrichum higginsianum reveals chromosome structure and association of transposable elements with secondary metabolite gene clusters.</title>
        <authorList>
            <person name="Dallery J.-F."/>
            <person name="Lapalu N."/>
            <person name="Zampounis A."/>
            <person name="Pigne S."/>
            <person name="Luyten I."/>
            <person name="Amselem J."/>
            <person name="Wittenberg A.H.J."/>
            <person name="Zhou S."/>
            <person name="de Queiroz M.V."/>
            <person name="Robin G.P."/>
            <person name="Auger A."/>
            <person name="Hainaut M."/>
            <person name="Henrissat B."/>
            <person name="Kim K.-T."/>
            <person name="Lee Y.-H."/>
            <person name="Lespinet O."/>
            <person name="Schwartz D.C."/>
            <person name="Thon M.R."/>
            <person name="O'Connell R.J."/>
        </authorList>
    </citation>
    <scope>NUCLEOTIDE SEQUENCE [LARGE SCALE GENOMIC DNA]</scope>
    <source>
        <strain>IMI 349063</strain>
    </source>
</reference>
<reference key="2">
    <citation type="journal article" date="2020" name="Nat. Commun.">
        <title>Synthetic biology based construction of biological activity-related library of fungal decalin-containing diterpenoid pyrones.</title>
        <authorList>
            <person name="Tsukada K."/>
            <person name="Shinki S."/>
            <person name="Kaneko A."/>
            <person name="Murakami K."/>
            <person name="Irie K."/>
            <person name="Murai M."/>
            <person name="Miyoshi H."/>
            <person name="Dan S."/>
            <person name="Kawaji K."/>
            <person name="Hayashi H."/>
            <person name="Kodama E.N."/>
            <person name="Hori A."/>
            <person name="Salim E."/>
            <person name="Kuraishi T."/>
            <person name="Hirata N."/>
            <person name="Kanda Y."/>
            <person name="Asai T."/>
        </authorList>
    </citation>
    <scope>FUNCTION</scope>
    <scope>PATHWAY</scope>
    <scope>BIOTECHNOLOGY</scope>
</reference>